<proteinExistence type="evidence at protein level"/>
<sequence length="464" mass="54358">MPEDTSYSNSFEDYYNNSHAISPYKDSFYKEMTPSKPNVRFGDDDVNIFDQRKKVNEINKNNTVKRSIPSSISTTITPNKSSLKSPRGKRASKNSFDNETKLESKNETLKEVNDAVNRCYALCNIPTKHVSINSISDLAQTFETLAVGITHETNRKAECERSKNAIDSLYYHEQLEKKELNEKSLQMAIDHLLKVTKQNLRQADDGNKLKETEALKSFIEEIEEVDDNKISINSLQQQLLEEKTANNILRRDYYKLQERGRRLCHEFQELQDDYSKQMKQKEYEVQKLKNEIKVLLNMNDNLKAEKAHYSQKEKQYFQKYTYIEKYMNHVKEEYNRKEDECKKLNFIIDKSMKKIEHLERSLQTQFTAQNSFSTAMIQEEGPKDAHLKDRYHKVKEFMEQKLQTSKINDPSCSEAEALDNVLCLIESSMKTLDKNSKCYPIATKKCIKYVTDSPRLKENEHVTN</sequence>
<gene>
    <name type="primary">MPC54</name>
    <name type="ordered locus">YOR177C</name>
</gene>
<protein>
    <recommendedName>
        <fullName>Meiotic plaque component protein 54</fullName>
    </recommendedName>
</protein>
<keyword id="KW-0131">Cell cycle</keyword>
<keyword id="KW-0132">Cell division</keyword>
<keyword id="KW-0175">Coiled coil</keyword>
<keyword id="KW-0963">Cytoplasm</keyword>
<keyword id="KW-0206">Cytoskeleton</keyword>
<keyword id="KW-0469">Meiosis</keyword>
<keyword id="KW-0472">Membrane</keyword>
<keyword id="KW-1185">Reference proteome</keyword>
<keyword id="KW-0749">Sporulation</keyword>
<evidence type="ECO:0000255" key="1"/>
<evidence type="ECO:0000256" key="2">
    <source>
        <dbReference type="SAM" id="MobiDB-lite"/>
    </source>
</evidence>
<evidence type="ECO:0000269" key="3">
    <source>
    </source>
</evidence>
<evidence type="ECO:0000269" key="4">
    <source>
    </source>
</evidence>
<evidence type="ECO:0000269" key="5">
    <source>
    </source>
</evidence>
<name>MPC54_YEAST</name>
<organism>
    <name type="scientific">Saccharomyces cerevisiae (strain ATCC 204508 / S288c)</name>
    <name type="common">Baker's yeast</name>
    <dbReference type="NCBI Taxonomy" id="559292"/>
    <lineage>
        <taxon>Eukaryota</taxon>
        <taxon>Fungi</taxon>
        <taxon>Dikarya</taxon>
        <taxon>Ascomycota</taxon>
        <taxon>Saccharomycotina</taxon>
        <taxon>Saccharomycetes</taxon>
        <taxon>Saccharomycetales</taxon>
        <taxon>Saccharomycetaceae</taxon>
        <taxon>Saccharomyces</taxon>
    </lineage>
</organism>
<accession>Q08550</accession>
<accession>D6W2N3</accession>
<reference key="1">
    <citation type="journal article" date="1997" name="Nature">
        <title>The nucleotide sequence of Saccharomyces cerevisiae chromosome XV.</title>
        <authorList>
            <person name="Dujon B."/>
            <person name="Albermann K."/>
            <person name="Aldea M."/>
            <person name="Alexandraki D."/>
            <person name="Ansorge W."/>
            <person name="Arino J."/>
            <person name="Benes V."/>
            <person name="Bohn C."/>
            <person name="Bolotin-Fukuhara M."/>
            <person name="Bordonne R."/>
            <person name="Boyer J."/>
            <person name="Camasses A."/>
            <person name="Casamayor A."/>
            <person name="Casas C."/>
            <person name="Cheret G."/>
            <person name="Cziepluch C."/>
            <person name="Daignan-Fornier B."/>
            <person name="Dang V.-D."/>
            <person name="de Haan M."/>
            <person name="Delius H."/>
            <person name="Durand P."/>
            <person name="Fairhead C."/>
            <person name="Feldmann H."/>
            <person name="Gaillon L."/>
            <person name="Galisson F."/>
            <person name="Gamo F.-J."/>
            <person name="Gancedo C."/>
            <person name="Goffeau A."/>
            <person name="Goulding S.E."/>
            <person name="Grivell L.A."/>
            <person name="Habbig B."/>
            <person name="Hand N.J."/>
            <person name="Hani J."/>
            <person name="Hattenhorst U."/>
            <person name="Hebling U."/>
            <person name="Hernando Y."/>
            <person name="Herrero E."/>
            <person name="Heumann K."/>
            <person name="Hiesel R."/>
            <person name="Hilger F."/>
            <person name="Hofmann B."/>
            <person name="Hollenberg C.P."/>
            <person name="Hughes B."/>
            <person name="Jauniaux J.-C."/>
            <person name="Kalogeropoulos A."/>
            <person name="Katsoulou C."/>
            <person name="Kordes E."/>
            <person name="Lafuente M.J."/>
            <person name="Landt O."/>
            <person name="Louis E.J."/>
            <person name="Maarse A.C."/>
            <person name="Madania A."/>
            <person name="Mannhaupt G."/>
            <person name="Marck C."/>
            <person name="Martin R.P."/>
            <person name="Mewes H.-W."/>
            <person name="Michaux G."/>
            <person name="Paces V."/>
            <person name="Parle-McDermott A.G."/>
            <person name="Pearson B.M."/>
            <person name="Perrin A."/>
            <person name="Pettersson B."/>
            <person name="Poch O."/>
            <person name="Pohl T.M."/>
            <person name="Poirey R."/>
            <person name="Portetelle D."/>
            <person name="Pujol A."/>
            <person name="Purnelle B."/>
            <person name="Ramezani Rad M."/>
            <person name="Rechmann S."/>
            <person name="Schwager C."/>
            <person name="Schweizer M."/>
            <person name="Sor F."/>
            <person name="Sterky F."/>
            <person name="Tarassov I.A."/>
            <person name="Teodoru C."/>
            <person name="Tettelin H."/>
            <person name="Thierry A."/>
            <person name="Tobiasch E."/>
            <person name="Tzermia M."/>
            <person name="Uhlen M."/>
            <person name="Unseld M."/>
            <person name="Valens M."/>
            <person name="Vandenbol M."/>
            <person name="Vetter I."/>
            <person name="Vlcek C."/>
            <person name="Voet M."/>
            <person name="Volckaert G."/>
            <person name="Voss H."/>
            <person name="Wambutt R."/>
            <person name="Wedler H."/>
            <person name="Wiemann S."/>
            <person name="Winsor B."/>
            <person name="Wolfe K.H."/>
            <person name="Zollner A."/>
            <person name="Zumstein E."/>
            <person name="Kleine K."/>
        </authorList>
    </citation>
    <scope>NUCLEOTIDE SEQUENCE [LARGE SCALE GENOMIC DNA]</scope>
    <source>
        <strain>ATCC 204508 / S288c</strain>
    </source>
</reference>
<reference key="2">
    <citation type="journal article" date="2014" name="G3 (Bethesda)">
        <title>The reference genome sequence of Saccharomyces cerevisiae: Then and now.</title>
        <authorList>
            <person name="Engel S.R."/>
            <person name="Dietrich F.S."/>
            <person name="Fisk D.G."/>
            <person name="Binkley G."/>
            <person name="Balakrishnan R."/>
            <person name="Costanzo M.C."/>
            <person name="Dwight S.S."/>
            <person name="Hitz B.C."/>
            <person name="Karra K."/>
            <person name="Nash R.S."/>
            <person name="Weng S."/>
            <person name="Wong E.D."/>
            <person name="Lloyd P."/>
            <person name="Skrzypek M.S."/>
            <person name="Miyasato S.R."/>
            <person name="Simison M."/>
            <person name="Cherry J.M."/>
        </authorList>
    </citation>
    <scope>GENOME REANNOTATION</scope>
    <source>
        <strain>ATCC 204508 / S288c</strain>
    </source>
</reference>
<reference key="3">
    <citation type="journal article" date="2000" name="EMBO J.">
        <title>Role of the spindle pole body of yeast in mediating assembly of the prospore membrane during meiosis.</title>
        <authorList>
            <person name="Knop M."/>
            <person name="Strasser K."/>
        </authorList>
    </citation>
    <scope>FUNCTION</scope>
    <scope>SUBCELLULAR LOCATION</scope>
    <scope>DEVELOPMENTAL STAGE</scope>
    <scope>INTERACTION WITH SPO21; NUD1 AND SPC42</scope>
</reference>
<reference key="4">
    <citation type="journal article" date="2001" name="Mol. Biol. Cell">
        <title>ADY1, a novel gene required for prospore membrane formation at selected spindle poles in Saccharomyces cerevisiae.</title>
        <authorList>
            <person name="Deng C."/>
            <person name="Saunders W.S."/>
        </authorList>
    </citation>
    <scope>SUBCELLULAR LOCATION</scope>
</reference>
<reference key="5">
    <citation type="journal article" date="2001" name="EMBO J.">
        <title>Prospore membrane formation linked to the leading edge protein (LEP) coat assembly.</title>
        <authorList>
            <person name="Moreno-Borchart A.C."/>
            <person name="Strasser K."/>
            <person name="Finkbeiner M.G."/>
            <person name="Shevchenko A."/>
            <person name="Shevchenko A."/>
            <person name="Knop M."/>
        </authorList>
    </citation>
    <scope>FUNCTION</scope>
    <scope>COMPOSITION OF A SPB COMPLEX</scope>
    <scope>INTERACTION WITH ADY3</scope>
</reference>
<reference key="6">
    <citation type="journal article" date="2003" name="Eukaryot. Cell">
        <title>Ady4p and Spo74p are components of the meiotic spindle pole body that promote growth of the prospore membrane in Saccharomyces cerevisiae.</title>
        <authorList>
            <person name="Nickas M.E."/>
            <person name="Schwartz C."/>
            <person name="Neiman A.M."/>
        </authorList>
    </citation>
    <scope>INTERACTION WITH SPO74</scope>
</reference>
<comment type="function">
    <text evidence="3 4">Involved in the pathway that organizes the shaping and sizing of the prospore membrane (PSM) during sporulation.</text>
</comment>
<comment type="subunit">
    <text evidence="3 4 5">Interacts directly with SPO21/MPC70, NUD1, SPO74 and SPC42. Probable component of a spindle pole body (SPB) complex composed of ADY3, SSP1, DON1, MPC54, SPO21/MPC70, NUD1 and CNM67.</text>
</comment>
<comment type="interaction">
    <interactant intactId="EBI-34513">
        <id>Q08550</id>
    </interactant>
    <interactant intactId="EBI-33406">
        <id>Q07732</id>
        <label>ADY3</label>
    </interactant>
    <organismsDiffer>false</organismsDiffer>
    <experiments>3</experiments>
</comment>
<comment type="interaction">
    <interactant intactId="EBI-34513">
        <id>Q08550</id>
    </interactant>
    <interactant intactId="EBI-12361">
        <id>P32336</id>
        <label>NUD1</label>
    </interactant>
    <organismsDiffer>false</organismsDiffer>
    <experiments>2</experiments>
</comment>
<comment type="interaction">
    <interactant intactId="EBI-34513">
        <id>Q08550</id>
    </interactant>
    <interactant intactId="EBI-36275">
        <id>Q12411</id>
        <label>SPO21</label>
    </interactant>
    <organismsDiffer>false</organismsDiffer>
    <experiments>3</experiments>
</comment>
<comment type="subcellular location">
    <subcellularLocation>
        <location>Prospore membrane</location>
    </subcellularLocation>
    <subcellularLocation>
        <location>Cytoplasm</location>
        <location>Cytoskeleton</location>
        <location>Microtubule organizing center</location>
        <location>Spindle pole body</location>
    </subcellularLocation>
    <subcellularLocation>
        <location>Cytoplasm</location>
        <location>Cytoskeleton</location>
        <location>Spindle pole</location>
    </subcellularLocation>
    <text>Localizes to the ends of spindle microtubules in cells in meiosis. Localizes to all four spindle pole bodies during meiosis, ADY1 is required for this localization.</text>
</comment>
<comment type="developmental stage">
    <text evidence="3">Meiosis-specific. Expressed during meiosis II, from 3 to 9 hours after induction of sporulation. Not expressed during mitosis.</text>
</comment>
<feature type="chain" id="PRO_0000096555" description="Meiotic plaque component protein 54">
    <location>
        <begin position="1"/>
        <end position="464"/>
    </location>
</feature>
<feature type="region of interest" description="Disordered" evidence="2">
    <location>
        <begin position="71"/>
        <end position="102"/>
    </location>
</feature>
<feature type="coiled-coil region" evidence="1">
    <location>
        <begin position="99"/>
        <end position="119"/>
    </location>
</feature>
<feature type="coiled-coil region" evidence="1">
    <location>
        <begin position="156"/>
        <end position="193"/>
    </location>
</feature>
<feature type="coiled-coil region" evidence="1">
    <location>
        <begin position="231"/>
        <end position="365"/>
    </location>
</feature>
<dbReference type="EMBL" id="Z75085">
    <property type="protein sequence ID" value="CAA99386.1"/>
    <property type="molecule type" value="Genomic_DNA"/>
</dbReference>
<dbReference type="EMBL" id="BK006948">
    <property type="protein sequence ID" value="DAA10949.1"/>
    <property type="molecule type" value="Genomic_DNA"/>
</dbReference>
<dbReference type="PIR" id="S67069">
    <property type="entry name" value="S67069"/>
</dbReference>
<dbReference type="RefSeq" id="NP_014820.1">
    <property type="nucleotide sequence ID" value="NM_001183596.1"/>
</dbReference>
<dbReference type="SMR" id="Q08550"/>
<dbReference type="BioGRID" id="34572">
    <property type="interactions" value="77"/>
</dbReference>
<dbReference type="DIP" id="DIP-2886N"/>
<dbReference type="FunCoup" id="Q08550">
    <property type="interactions" value="157"/>
</dbReference>
<dbReference type="IntAct" id="Q08550">
    <property type="interactions" value="8"/>
</dbReference>
<dbReference type="MINT" id="Q08550"/>
<dbReference type="STRING" id="4932.YOR177C"/>
<dbReference type="iPTMnet" id="Q08550"/>
<dbReference type="PaxDb" id="4932-YOR177C"/>
<dbReference type="PeptideAtlas" id="Q08550"/>
<dbReference type="EnsemblFungi" id="YOR177C_mRNA">
    <property type="protein sequence ID" value="YOR177C"/>
    <property type="gene ID" value="YOR177C"/>
</dbReference>
<dbReference type="GeneID" id="854349"/>
<dbReference type="KEGG" id="sce:YOR177C"/>
<dbReference type="AGR" id="SGD:S000005703"/>
<dbReference type="SGD" id="S000005703">
    <property type="gene designation" value="MPC54"/>
</dbReference>
<dbReference type="VEuPathDB" id="FungiDB:YOR177C"/>
<dbReference type="HOGENOM" id="CLU_588136_0_0_1"/>
<dbReference type="InParanoid" id="Q08550"/>
<dbReference type="OMA" id="ITHETNR"/>
<dbReference type="OrthoDB" id="4046628at2759"/>
<dbReference type="BioCyc" id="YEAST:G3O-33689-MONOMER"/>
<dbReference type="BioGRID-ORCS" id="854349">
    <property type="hits" value="0 hits in 10 CRISPR screens"/>
</dbReference>
<dbReference type="CD-CODE" id="876000F7">
    <property type="entry name" value="Centrosome"/>
</dbReference>
<dbReference type="PRO" id="PR:Q08550"/>
<dbReference type="Proteomes" id="UP000002311">
    <property type="component" value="Chromosome XV"/>
</dbReference>
<dbReference type="RNAct" id="Q08550">
    <property type="molecule type" value="protein"/>
</dbReference>
<dbReference type="GO" id="GO:0005737">
    <property type="term" value="C:cytoplasm"/>
    <property type="evidence" value="ECO:0007669"/>
    <property type="project" value="UniProtKB-KW"/>
</dbReference>
<dbReference type="GO" id="GO:0035974">
    <property type="term" value="C:meiotic spindle pole body"/>
    <property type="evidence" value="ECO:0000314"/>
    <property type="project" value="SGD"/>
</dbReference>
<dbReference type="GO" id="GO:0005628">
    <property type="term" value="C:prospore membrane"/>
    <property type="evidence" value="ECO:0007669"/>
    <property type="project" value="UniProtKB-SubCell"/>
</dbReference>
<dbReference type="GO" id="GO:0000922">
    <property type="term" value="C:spindle pole"/>
    <property type="evidence" value="ECO:0007669"/>
    <property type="project" value="UniProtKB-SubCell"/>
</dbReference>
<dbReference type="GO" id="GO:0005816">
    <property type="term" value="C:spindle pole body"/>
    <property type="evidence" value="ECO:0007005"/>
    <property type="project" value="SGD"/>
</dbReference>
<dbReference type="GO" id="GO:0005198">
    <property type="term" value="F:structural molecule activity"/>
    <property type="evidence" value="ECO:0000314"/>
    <property type="project" value="SGD"/>
</dbReference>
<dbReference type="GO" id="GO:0032120">
    <property type="term" value="P:ascospore-type prospore membrane formation"/>
    <property type="evidence" value="ECO:0000315"/>
    <property type="project" value="SGD"/>
</dbReference>
<dbReference type="GO" id="GO:0051301">
    <property type="term" value="P:cell division"/>
    <property type="evidence" value="ECO:0007669"/>
    <property type="project" value="UniProtKB-KW"/>
</dbReference>
<dbReference type="GO" id="GO:0048278">
    <property type="term" value="P:vesicle docking"/>
    <property type="evidence" value="ECO:0000315"/>
    <property type="project" value="SGD"/>
</dbReference>